<reference key="1">
    <citation type="journal article" date="2015" name="Microbiology">
        <title>Genome of Methanoregula boonei 6A8 reveals adaptations to oligotrophic peatland environments.</title>
        <authorList>
            <person name="Braeuer S."/>
            <person name="Cadillo-Quiroz H."/>
            <person name="Kyrpides N."/>
            <person name="Woyke T."/>
            <person name="Goodwin L."/>
            <person name="Detter C."/>
            <person name="Podell S."/>
            <person name="Yavitt J.B."/>
            <person name="Zinder S.H."/>
        </authorList>
    </citation>
    <scope>NUCLEOTIDE SEQUENCE [LARGE SCALE GENOMIC DNA]</scope>
    <source>
        <strain>DSM 21154 / JCM 14090 / 6A8</strain>
    </source>
</reference>
<sequence>MVLAEDLECLKALALMGGMREPVFISSQTLGEVLETSPQTASRRLKALEGQRLISRTLNPDGQHITVTKEGEDGLRREYAEYCRLFAHEGGHYTLPGIVISGLGEGRYYMSLEPYKKQFLRHLGFEPYPGTLNLRLSGSDIPTRKKIDSLTWIPIHGFSAEGRTFGEVRCMPCRINDIPCGIVVPGRSHYPEDIVEVIAPVGLRDALGVKENDRVNVEVAYD</sequence>
<name>RIFK_METB6</name>
<keyword id="KW-0285">Flavoprotein</keyword>
<keyword id="KW-0288">FMN</keyword>
<keyword id="KW-0418">Kinase</keyword>
<keyword id="KW-0460">Magnesium</keyword>
<keyword id="KW-0479">Metal-binding</keyword>
<keyword id="KW-0547">Nucleotide-binding</keyword>
<keyword id="KW-1185">Reference proteome</keyword>
<keyword id="KW-0808">Transferase</keyword>
<feature type="chain" id="PRO_0000322088" description="Riboflavin kinase">
    <location>
        <begin position="1"/>
        <end position="222"/>
    </location>
</feature>
<feature type="region of interest" description="H-T-H motif-like">
    <location>
        <begin position="1"/>
        <end position="92"/>
    </location>
</feature>
<feature type="region of interest" description="Riboflavin kinase">
    <location>
        <begin position="93"/>
        <end position="222"/>
    </location>
</feature>
<feature type="binding site" evidence="1">
    <location>
        <begin position="102"/>
        <end position="107"/>
    </location>
    <ligand>
        <name>CDP</name>
        <dbReference type="ChEBI" id="CHEBI:58069"/>
    </ligand>
</feature>
<feature type="binding site" evidence="1">
    <location>
        <position position="131"/>
    </location>
    <ligand>
        <name>Mg(2+)</name>
        <dbReference type="ChEBI" id="CHEBI:18420"/>
    </ligand>
</feature>
<feature type="binding site" evidence="1">
    <location>
        <position position="133"/>
    </location>
    <ligand>
        <name>Mg(2+)</name>
        <dbReference type="ChEBI" id="CHEBI:18420"/>
    </ligand>
</feature>
<feature type="binding site" evidence="1">
    <location>
        <position position="188"/>
    </location>
    <ligand>
        <name>FMN</name>
        <dbReference type="ChEBI" id="CHEBI:58210"/>
    </ligand>
</feature>
<feature type="binding site" evidence="1">
    <location>
        <position position="196"/>
    </location>
    <ligand>
        <name>FMN</name>
        <dbReference type="ChEBI" id="CHEBI:58210"/>
    </ligand>
</feature>
<feature type="binding site" evidence="1">
    <location>
        <begin position="201"/>
        <end position="204"/>
    </location>
    <ligand>
        <name>CDP</name>
        <dbReference type="ChEBI" id="CHEBI:58069"/>
    </ligand>
</feature>
<protein>
    <recommendedName>
        <fullName>Riboflavin kinase</fullName>
        <shortName>RFK</shortName>
        <ecNumber>2.7.1.161</ecNumber>
    </recommendedName>
    <alternativeName>
        <fullName>CTP-dependent riboflavin kinase</fullName>
    </alternativeName>
    <alternativeName>
        <fullName>CTP:riboflavin 5'-phosphotransferase</fullName>
    </alternativeName>
    <alternativeName>
        <fullName>Flavokinase</fullName>
    </alternativeName>
</protein>
<organism>
    <name type="scientific">Methanoregula boonei (strain DSM 21154 / JCM 14090 / 6A8)</name>
    <dbReference type="NCBI Taxonomy" id="456442"/>
    <lineage>
        <taxon>Archaea</taxon>
        <taxon>Methanobacteriati</taxon>
        <taxon>Methanobacteriota</taxon>
        <taxon>Stenosarchaea group</taxon>
        <taxon>Methanomicrobia</taxon>
        <taxon>Methanomicrobiales</taxon>
        <taxon>Methanoregulaceae</taxon>
        <taxon>Methanoregula</taxon>
    </lineage>
</organism>
<gene>
    <name type="primary">ribK</name>
    <name type="ordered locus">Mboo_0159</name>
</gene>
<comment type="function">
    <text evidence="1">Catalyzes the CTP-dependent phosphorylation of riboflavin (vitamin B2) to form flavin mononucleotide (FMN).</text>
</comment>
<comment type="catalytic activity">
    <reaction>
        <text>riboflavin + CTP = CDP + FMN + H(+)</text>
        <dbReference type="Rhea" id="RHEA:25021"/>
        <dbReference type="ChEBI" id="CHEBI:15378"/>
        <dbReference type="ChEBI" id="CHEBI:37563"/>
        <dbReference type="ChEBI" id="CHEBI:57986"/>
        <dbReference type="ChEBI" id="CHEBI:58069"/>
        <dbReference type="ChEBI" id="CHEBI:58210"/>
        <dbReference type="EC" id="2.7.1.161"/>
    </reaction>
</comment>
<comment type="cofactor">
    <cofactor evidence="1">
        <name>Mg(2+)</name>
        <dbReference type="ChEBI" id="CHEBI:18420"/>
    </cofactor>
    <text evidence="1">Binds 1 Mg(2+) ion per subunit.</text>
</comment>
<comment type="pathway">
    <text>Cofactor biosynthesis; FMN biosynthesis; FMN from riboflavin (CTP route): step 1/1.</text>
</comment>
<comment type="similarity">
    <text evidence="2">Belongs to the archaeal riboflavin kinase family.</text>
</comment>
<evidence type="ECO:0000250" key="1"/>
<evidence type="ECO:0000305" key="2"/>
<proteinExistence type="inferred from homology"/>
<accession>A7I4M1</accession>
<dbReference type="EC" id="2.7.1.161"/>
<dbReference type="EMBL" id="CP000780">
    <property type="protein sequence ID" value="ABS54682.1"/>
    <property type="molecule type" value="Genomic_DNA"/>
</dbReference>
<dbReference type="RefSeq" id="WP_011991170.1">
    <property type="nucleotide sequence ID" value="NC_009712.1"/>
</dbReference>
<dbReference type="SMR" id="A7I4M1"/>
<dbReference type="STRING" id="456442.Mboo_0159"/>
<dbReference type="GeneID" id="5411539"/>
<dbReference type="KEGG" id="mbn:Mboo_0159"/>
<dbReference type="eggNOG" id="arCOG01904">
    <property type="taxonomic scope" value="Archaea"/>
</dbReference>
<dbReference type="HOGENOM" id="CLU_088476_0_0_2"/>
<dbReference type="OrthoDB" id="30955at2157"/>
<dbReference type="UniPathway" id="UPA00276">
    <property type="reaction ID" value="UER00929"/>
</dbReference>
<dbReference type="Proteomes" id="UP000002408">
    <property type="component" value="Chromosome"/>
</dbReference>
<dbReference type="GO" id="GO:0000287">
    <property type="term" value="F:magnesium ion binding"/>
    <property type="evidence" value="ECO:0007669"/>
    <property type="project" value="UniProtKB-UniRule"/>
</dbReference>
<dbReference type="GO" id="GO:0000166">
    <property type="term" value="F:nucleotide binding"/>
    <property type="evidence" value="ECO:0007669"/>
    <property type="project" value="UniProtKB-UniRule"/>
</dbReference>
<dbReference type="GO" id="GO:0008531">
    <property type="term" value="F:riboflavin kinase activity"/>
    <property type="evidence" value="ECO:0007669"/>
    <property type="project" value="InterPro"/>
</dbReference>
<dbReference type="GO" id="GO:0009398">
    <property type="term" value="P:FMN biosynthetic process"/>
    <property type="evidence" value="ECO:0007669"/>
    <property type="project" value="UniProtKB-UniRule"/>
</dbReference>
<dbReference type="GO" id="GO:0009231">
    <property type="term" value="P:riboflavin biosynthetic process"/>
    <property type="evidence" value="ECO:0007669"/>
    <property type="project" value="InterPro"/>
</dbReference>
<dbReference type="Gene3D" id="2.40.30.30">
    <property type="entry name" value="Riboflavin kinase-like"/>
    <property type="match status" value="1"/>
</dbReference>
<dbReference type="Gene3D" id="1.10.10.10">
    <property type="entry name" value="Winged helix-like DNA-binding domain superfamily/Winged helix DNA-binding domain"/>
    <property type="match status" value="1"/>
</dbReference>
<dbReference type="HAMAP" id="MF_01285">
    <property type="entry name" value="Riboflavin_kinase"/>
    <property type="match status" value="1"/>
</dbReference>
<dbReference type="InterPro" id="IPR039063">
    <property type="entry name" value="RibK_CTP-dep"/>
</dbReference>
<dbReference type="InterPro" id="IPR023470">
    <property type="entry name" value="Riboflavin_kinase_archaeal"/>
</dbReference>
<dbReference type="InterPro" id="IPR023602">
    <property type="entry name" value="Riboflavin_kinase_CTP-dep"/>
</dbReference>
<dbReference type="InterPro" id="IPR023465">
    <property type="entry name" value="Riboflavin_kinase_dom_sf"/>
</dbReference>
<dbReference type="InterPro" id="IPR036388">
    <property type="entry name" value="WH-like_DNA-bd_sf"/>
</dbReference>
<dbReference type="InterPro" id="IPR036390">
    <property type="entry name" value="WH_DNA-bd_sf"/>
</dbReference>
<dbReference type="PANTHER" id="PTHR40706">
    <property type="entry name" value="RIBOFLAVIN KINASE"/>
    <property type="match status" value="1"/>
</dbReference>
<dbReference type="PANTHER" id="PTHR40706:SF1">
    <property type="entry name" value="RIBOFLAVIN KINASE"/>
    <property type="match status" value="1"/>
</dbReference>
<dbReference type="Pfam" id="PF01982">
    <property type="entry name" value="CTP-dep_RFKase"/>
    <property type="match status" value="1"/>
</dbReference>
<dbReference type="SUPFAM" id="SSF82114">
    <property type="entry name" value="Riboflavin kinase-like"/>
    <property type="match status" value="1"/>
</dbReference>
<dbReference type="SUPFAM" id="SSF46785">
    <property type="entry name" value="Winged helix' DNA-binding domain"/>
    <property type="match status" value="1"/>
</dbReference>